<proteinExistence type="inferred from homology"/>
<sequence length="214" mass="23385">MATSEAPLLKRTAATLSDDMAVNYKLLHSPKFRALVVENVLSVTAFAFMARQTESLAGPEMETLNNCGVNGCGFTSFYQFKGVVGVYAAFWVYTVLLIGLYLFSRGPPPGTEFVVHALFTLCMIAFVSLSVISCTSTVIESDYSVCKNAAYAKASLVFAALVVVLNCATCAFVFKQWRSLQFVGMPENFRPFGRHRHKHGHHAGDADDAIPTHP</sequence>
<accession>Q00U99</accession>
<accession>A0A096P8X6</accession>
<reference key="1">
    <citation type="journal article" date="2006" name="Proc. Natl. Acad. Sci. U.S.A.">
        <title>Genome analysis of the smallest free-living eukaryote Ostreococcus tauri unveils many unique features.</title>
        <authorList>
            <person name="Derelle E."/>
            <person name="Ferraz C."/>
            <person name="Rombauts S."/>
            <person name="Rouze P."/>
            <person name="Worden A.Z."/>
            <person name="Robbens S."/>
            <person name="Partensky F."/>
            <person name="Degroeve S."/>
            <person name="Echeynie S."/>
            <person name="Cooke R."/>
            <person name="Saeys Y."/>
            <person name="Wuyts J."/>
            <person name="Jabbari K."/>
            <person name="Bowler C."/>
            <person name="Panaud O."/>
            <person name="Piegu B."/>
            <person name="Ball S.G."/>
            <person name="Ral J.-P."/>
            <person name="Bouget F.-Y."/>
            <person name="Piganeau G."/>
            <person name="De Baets B."/>
            <person name="Picard A."/>
            <person name="Delseny M."/>
            <person name="Demaille J."/>
            <person name="Van de Peer Y."/>
            <person name="Moreau H."/>
        </authorList>
    </citation>
    <scope>NUCLEOTIDE SEQUENCE [LARGE SCALE GENOMIC DNA]</scope>
    <source>
        <strain>OTTH0595</strain>
    </source>
</reference>
<reference key="2">
    <citation type="journal article" date="2014" name="Plant Physiol.">
        <title>Functional and evolutionary analysis of the CASPARIAN STRIP MEMBRANE DOMAIN PROTEIN family.</title>
        <authorList>
            <person name="Roppolo D."/>
            <person name="Boeckmann B."/>
            <person name="Pfister A."/>
            <person name="Boutet E."/>
            <person name="Rubio M.C."/>
            <person name="Denervaud-Tendon V."/>
            <person name="Vermeer J.E."/>
            <person name="Gheyselinck J."/>
            <person name="Xenarios I."/>
            <person name="Geldner N."/>
        </authorList>
    </citation>
    <scope>GENE FAMILY</scope>
    <scope>NOMENCLATURE</scope>
</reference>
<organism>
    <name type="scientific">Ostreococcus tauri</name>
    <dbReference type="NCBI Taxonomy" id="70448"/>
    <lineage>
        <taxon>Eukaryota</taxon>
        <taxon>Viridiplantae</taxon>
        <taxon>Chlorophyta</taxon>
        <taxon>Mamiellophyceae</taxon>
        <taxon>Mamiellales</taxon>
        <taxon>Bathycoccaceae</taxon>
        <taxon>Ostreococcus</taxon>
    </lineage>
</organism>
<feature type="chain" id="PRO_0000418713" description="CASP-like protein 0U1">
    <location>
        <begin position="1"/>
        <end position="214"/>
    </location>
</feature>
<feature type="topological domain" description="Cytoplasmic" evidence="2">
    <location>
        <begin position="1"/>
        <end position="82"/>
    </location>
</feature>
<feature type="transmembrane region" description="Helical" evidence="2">
    <location>
        <begin position="83"/>
        <end position="103"/>
    </location>
</feature>
<feature type="topological domain" description="Extracellular" evidence="2">
    <location>
        <begin position="104"/>
        <end position="112"/>
    </location>
</feature>
<feature type="transmembrane region" description="Helical" evidence="2">
    <location>
        <begin position="113"/>
        <end position="133"/>
    </location>
</feature>
<feature type="topological domain" description="Cytoplasmic" evidence="2">
    <location>
        <begin position="134"/>
        <end position="153"/>
    </location>
</feature>
<feature type="transmembrane region" description="Helical" evidence="2">
    <location>
        <begin position="154"/>
        <end position="174"/>
    </location>
</feature>
<feature type="topological domain" description="Extracellular" evidence="2">
    <location>
        <begin position="175"/>
        <end position="214"/>
    </location>
</feature>
<feature type="region of interest" description="Disordered" evidence="3">
    <location>
        <begin position="194"/>
        <end position="214"/>
    </location>
</feature>
<keyword id="KW-1003">Cell membrane</keyword>
<keyword id="KW-0472">Membrane</keyword>
<keyword id="KW-1185">Reference proteome</keyword>
<keyword id="KW-0812">Transmembrane</keyword>
<keyword id="KW-1133">Transmembrane helix</keyword>
<name>CSPL1_OSTTA</name>
<comment type="subunit">
    <text evidence="1">Homodimer and heterodimers.</text>
</comment>
<comment type="subcellular location">
    <subcellularLocation>
        <location evidence="1">Cell membrane</location>
        <topology evidence="1">Multi-pass membrane protein</topology>
    </subcellularLocation>
</comment>
<comment type="similarity">
    <text evidence="4">Belongs to the Casparian strip membrane proteins (CASP) family.</text>
</comment>
<protein>
    <recommendedName>
        <fullName>CASP-like protein 0U1</fullName>
        <shortName>OtCASPL0U1</shortName>
    </recommendedName>
</protein>
<evidence type="ECO:0000250" key="1"/>
<evidence type="ECO:0000255" key="2"/>
<evidence type="ECO:0000256" key="3">
    <source>
        <dbReference type="SAM" id="MobiDB-lite"/>
    </source>
</evidence>
<evidence type="ECO:0000305" key="4"/>
<evidence type="ECO:0000312" key="5">
    <source>
        <dbReference type="EMBL" id="CEG00362.1"/>
    </source>
</evidence>
<dbReference type="EMBL" id="CAID01000016">
    <property type="protein sequence ID" value="CEG00362.1"/>
    <property type="molecule type" value="Genomic_DNA"/>
</dbReference>
<dbReference type="SMR" id="Q00U99"/>
<dbReference type="InParanoid" id="Q00U99"/>
<dbReference type="OrthoDB" id="10396524at2759"/>
<dbReference type="Proteomes" id="UP000009170">
    <property type="component" value="Chromosome 16"/>
</dbReference>
<dbReference type="GO" id="GO:0005886">
    <property type="term" value="C:plasma membrane"/>
    <property type="evidence" value="ECO:0007669"/>
    <property type="project" value="UniProtKB-SubCell"/>
</dbReference>
<gene>
    <name evidence="5" type="ordered locus">Ot16g01510</name>
</gene>